<evidence type="ECO:0000255" key="1">
    <source>
        <dbReference type="HAMAP-Rule" id="MF_00227"/>
    </source>
</evidence>
<proteinExistence type="inferred from homology"/>
<protein>
    <recommendedName>
        <fullName evidence="1">Ribonuclease P protein component</fullName>
        <shortName evidence="1">RNase P protein</shortName>
        <shortName evidence="1">RNaseP protein</shortName>
        <ecNumber evidence="1">3.1.26.5</ecNumber>
    </recommendedName>
    <alternativeName>
        <fullName evidence="1">Protein C5</fullName>
    </alternativeName>
</protein>
<reference key="1">
    <citation type="journal article" date="2004" name="PLoS Biol.">
        <title>Genomic insights into methanotrophy: the complete genome sequence of Methylococcus capsulatus (Bath).</title>
        <authorList>
            <person name="Ward N.L."/>
            <person name="Larsen O."/>
            <person name="Sakwa J."/>
            <person name="Bruseth L."/>
            <person name="Khouri H.M."/>
            <person name="Durkin A.S."/>
            <person name="Dimitrov G."/>
            <person name="Jiang L."/>
            <person name="Scanlan D."/>
            <person name="Kang K.H."/>
            <person name="Lewis M.R."/>
            <person name="Nelson K.E."/>
            <person name="Methe B.A."/>
            <person name="Wu M."/>
            <person name="Heidelberg J.F."/>
            <person name="Paulsen I.T."/>
            <person name="Fouts D.E."/>
            <person name="Ravel J."/>
            <person name="Tettelin H."/>
            <person name="Ren Q."/>
            <person name="Read T.D."/>
            <person name="DeBoy R.T."/>
            <person name="Seshadri R."/>
            <person name="Salzberg S.L."/>
            <person name="Jensen H.B."/>
            <person name="Birkeland N.K."/>
            <person name="Nelson W.C."/>
            <person name="Dodson R.J."/>
            <person name="Grindhaug S.H."/>
            <person name="Holt I.E."/>
            <person name="Eidhammer I."/>
            <person name="Jonasen I."/>
            <person name="Vanaken S."/>
            <person name="Utterback T.R."/>
            <person name="Feldblyum T.V."/>
            <person name="Fraser C.M."/>
            <person name="Lillehaug J.R."/>
            <person name="Eisen J.A."/>
        </authorList>
    </citation>
    <scope>NUCLEOTIDE SEQUENCE [LARGE SCALE GENOMIC DNA]</scope>
    <source>
        <strain>ATCC 33009 / NCIMB 11132 / Bath</strain>
    </source>
</reference>
<feature type="chain" id="PRO_0000198483" description="Ribonuclease P protein component">
    <location>
        <begin position="1"/>
        <end position="128"/>
    </location>
</feature>
<comment type="function">
    <text evidence="1">RNaseP catalyzes the removal of the 5'-leader sequence from pre-tRNA to produce the mature 5'-terminus. It can also cleave other RNA substrates such as 4.5S RNA. The protein component plays an auxiliary but essential role in vivo by binding to the 5'-leader sequence and broadening the substrate specificity of the ribozyme.</text>
</comment>
<comment type="catalytic activity">
    <reaction evidence="1">
        <text>Endonucleolytic cleavage of RNA, removing 5'-extranucleotides from tRNA precursor.</text>
        <dbReference type="EC" id="3.1.26.5"/>
    </reaction>
</comment>
<comment type="subunit">
    <text evidence="1">Consists of a catalytic RNA component (M1 or rnpB) and a protein subunit.</text>
</comment>
<comment type="similarity">
    <text evidence="1">Belongs to the RnpA family.</text>
</comment>
<accession>Q602M8</accession>
<sequence>MERPVPGQGYGFPRSHRLASPVEFRFVFEDACRSSDSWLTVLARPNSLAHPRLGLALSRKQIRKAVDRNRIKRLVRESFRLRQAQLGTIDYVVMARTPATSVNSAVLLRALEKHWLILTRRCSGSSSP</sequence>
<keyword id="KW-0255">Endonuclease</keyword>
<keyword id="KW-0378">Hydrolase</keyword>
<keyword id="KW-0540">Nuclease</keyword>
<keyword id="KW-1185">Reference proteome</keyword>
<keyword id="KW-0694">RNA-binding</keyword>
<keyword id="KW-0819">tRNA processing</keyword>
<name>RNPA_METCA</name>
<organism>
    <name type="scientific">Methylococcus capsulatus (strain ATCC 33009 / NCIMB 11132 / Bath)</name>
    <dbReference type="NCBI Taxonomy" id="243233"/>
    <lineage>
        <taxon>Bacteria</taxon>
        <taxon>Pseudomonadati</taxon>
        <taxon>Pseudomonadota</taxon>
        <taxon>Gammaproteobacteria</taxon>
        <taxon>Methylococcales</taxon>
        <taxon>Methylococcaceae</taxon>
        <taxon>Methylococcus</taxon>
    </lineage>
</organism>
<gene>
    <name evidence="1" type="primary">rnpA</name>
    <name type="ordered locus">MCA3035</name>
</gene>
<dbReference type="EC" id="3.1.26.5" evidence="1"/>
<dbReference type="EMBL" id="AE017282">
    <property type="protein sequence ID" value="AAU90906.1"/>
    <property type="molecule type" value="Genomic_DNA"/>
</dbReference>
<dbReference type="RefSeq" id="WP_010962223.1">
    <property type="nucleotide sequence ID" value="NC_002977.6"/>
</dbReference>
<dbReference type="SMR" id="Q602M8"/>
<dbReference type="STRING" id="243233.MCA3035"/>
<dbReference type="GeneID" id="88225197"/>
<dbReference type="KEGG" id="mca:MCA3035"/>
<dbReference type="eggNOG" id="COG0594">
    <property type="taxonomic scope" value="Bacteria"/>
</dbReference>
<dbReference type="HOGENOM" id="CLU_117179_11_0_6"/>
<dbReference type="Proteomes" id="UP000006821">
    <property type="component" value="Chromosome"/>
</dbReference>
<dbReference type="GO" id="GO:0030677">
    <property type="term" value="C:ribonuclease P complex"/>
    <property type="evidence" value="ECO:0007669"/>
    <property type="project" value="TreeGrafter"/>
</dbReference>
<dbReference type="GO" id="GO:0042781">
    <property type="term" value="F:3'-tRNA processing endoribonuclease activity"/>
    <property type="evidence" value="ECO:0007669"/>
    <property type="project" value="TreeGrafter"/>
</dbReference>
<dbReference type="GO" id="GO:0004526">
    <property type="term" value="F:ribonuclease P activity"/>
    <property type="evidence" value="ECO:0007669"/>
    <property type="project" value="UniProtKB-UniRule"/>
</dbReference>
<dbReference type="GO" id="GO:0000049">
    <property type="term" value="F:tRNA binding"/>
    <property type="evidence" value="ECO:0007669"/>
    <property type="project" value="UniProtKB-UniRule"/>
</dbReference>
<dbReference type="GO" id="GO:0001682">
    <property type="term" value="P:tRNA 5'-leader removal"/>
    <property type="evidence" value="ECO:0007669"/>
    <property type="project" value="UniProtKB-UniRule"/>
</dbReference>
<dbReference type="Gene3D" id="3.30.230.10">
    <property type="match status" value="1"/>
</dbReference>
<dbReference type="HAMAP" id="MF_00227">
    <property type="entry name" value="RNase_P"/>
    <property type="match status" value="1"/>
</dbReference>
<dbReference type="InterPro" id="IPR020568">
    <property type="entry name" value="Ribosomal_Su5_D2-typ_SF"/>
</dbReference>
<dbReference type="InterPro" id="IPR014721">
    <property type="entry name" value="Ribsml_uS5_D2-typ_fold_subgr"/>
</dbReference>
<dbReference type="InterPro" id="IPR000100">
    <property type="entry name" value="RNase_P"/>
</dbReference>
<dbReference type="InterPro" id="IPR020539">
    <property type="entry name" value="RNase_P_CS"/>
</dbReference>
<dbReference type="NCBIfam" id="TIGR00188">
    <property type="entry name" value="rnpA"/>
    <property type="match status" value="1"/>
</dbReference>
<dbReference type="PANTHER" id="PTHR33992">
    <property type="entry name" value="RIBONUCLEASE P PROTEIN COMPONENT"/>
    <property type="match status" value="1"/>
</dbReference>
<dbReference type="PANTHER" id="PTHR33992:SF1">
    <property type="entry name" value="RIBONUCLEASE P PROTEIN COMPONENT"/>
    <property type="match status" value="1"/>
</dbReference>
<dbReference type="Pfam" id="PF00825">
    <property type="entry name" value="Ribonuclease_P"/>
    <property type="match status" value="1"/>
</dbReference>
<dbReference type="SUPFAM" id="SSF54211">
    <property type="entry name" value="Ribosomal protein S5 domain 2-like"/>
    <property type="match status" value="1"/>
</dbReference>
<dbReference type="PROSITE" id="PS00648">
    <property type="entry name" value="RIBONUCLEASE_P"/>
    <property type="match status" value="1"/>
</dbReference>